<organism>
    <name type="scientific">Caenorhabditis elegans</name>
    <dbReference type="NCBI Taxonomy" id="6239"/>
    <lineage>
        <taxon>Eukaryota</taxon>
        <taxon>Metazoa</taxon>
        <taxon>Ecdysozoa</taxon>
        <taxon>Nematoda</taxon>
        <taxon>Chromadorea</taxon>
        <taxon>Rhabditida</taxon>
        <taxon>Rhabditina</taxon>
        <taxon>Rhabditomorpha</taxon>
        <taxon>Rhabditoidea</taxon>
        <taxon>Rhabditidae</taxon>
        <taxon>Peloderinae</taxon>
        <taxon>Caenorhabditis</taxon>
    </lineage>
</organism>
<reference key="1">
    <citation type="journal article" date="2006" name="FEBS Lett.">
        <title>Lifespan decrease in a Caenorhabditis elegans mutant lacking TRX-1, a thioredoxin expressed in ASJ sensory neurons.</title>
        <authorList>
            <person name="Miranda-Vizuete A."/>
            <person name="Gonzalez J.C."/>
            <person name="Gahmon G."/>
            <person name="Burghoorn J."/>
            <person name="Navas P."/>
            <person name="Swoboda P."/>
        </authorList>
    </citation>
    <scope>NUCLEOTIDE SEQUENCE [MRNA] (ISOFORMS A AND B)</scope>
    <scope>FUNCTION</scope>
    <scope>TISSUE SPECIFICITY</scope>
    <scope>DISRUPTION PHENOTYPE</scope>
</reference>
<reference key="2">
    <citation type="journal article" date="1998" name="Science">
        <title>Genome sequence of the nematode C. elegans: a platform for investigating biology.</title>
        <authorList>
            <consortium name="The C. elegans sequencing consortium"/>
        </authorList>
    </citation>
    <scope>NUCLEOTIDE SEQUENCE [LARGE SCALE GENOMIC DNA]</scope>
    <source>
        <strain>Bristol N2</strain>
    </source>
</reference>
<reference key="3">
    <citation type="journal article" date="2005" name="Genes Cells">
        <title>Thioredoxin is related to life span regulation and oxidative stress response in Caenorhabditis elegans.</title>
        <authorList>
            <person name="Jee C."/>
            <person name="Vanoaica L."/>
            <person name="Lee J."/>
            <person name="Park B.J."/>
            <person name="Ahnn J."/>
        </authorList>
    </citation>
    <scope>FUNCTION</scope>
    <scope>TISSUE SPECIFICITY</scope>
    <scope>DEVELOPMENTAL STAGE</scope>
    <scope>DISRUPTION PHENOTYPE</scope>
</reference>
<reference key="4">
    <citation type="journal article" date="2011" name="Biochem. Biophys. Res. Commun.">
        <title>The thioredoxin TRX-1 regulates adult lifespan extension induced by dietary restriction in Caenorhabditis elegans.</title>
        <authorList>
            <person name="Fierro-Gonzalez J.C."/>
            <person name="Gonzalez-Barrios M."/>
            <person name="Miranda-Vizuete A."/>
            <person name="Swoboda P."/>
        </authorList>
    </citation>
    <scope>FUNCTION</scope>
    <scope>TISSUE SPECIFICITY</scope>
    <scope>INDUCTION BY DIETARY RESTRICTION</scope>
    <scope>DISRUPTION PHENOTYPE</scope>
</reference>
<reference key="5">
    <citation type="journal article" date="2011" name="PLoS ONE">
        <title>The thioredoxin TRX-1 modulates the function of the insulin-like neuropeptide DAF-28 during dauer formation in Caenorhabditis elegans.</title>
        <authorList>
            <person name="Fierro-Gonzalez J.C."/>
            <person name="Cornils A."/>
            <person name="Alcedo J."/>
            <person name="Miranda-Vizuete A."/>
            <person name="Swoboda P."/>
        </authorList>
    </citation>
    <scope>FUNCTION</scope>
    <scope>TISSUE SPECIFICITY</scope>
    <scope>DEVELOPMENTAL STAGE</scope>
    <scope>INDUCTION BY DAUER FORMATION</scope>
    <scope>DISRUPTION PHENOTYPE</scope>
    <scope>MUTAGENESIS OF 39-CYS--CYS-42</scope>
</reference>
<reference key="6">
    <citation type="journal article" date="2016" name="Genetics">
        <title>TRX-1 Regulates SKN-1 Nuclear Localization Cell Non-autonomously in Caenorhabditis elegans.</title>
        <authorList>
            <person name="McCallum K.C."/>
            <person name="Liu B."/>
            <person name="Fierro-Gonzalez J.C."/>
            <person name="Swoboda P."/>
            <person name="Arur S."/>
            <person name="Miranda-Vizuete A."/>
            <person name="Garsin D.A."/>
        </authorList>
    </citation>
    <scope>FUNCTION</scope>
    <scope>DISRUPTION PHENOTYPE</scope>
    <scope>MUTAGENESIS OF CYS-39 AND CYS-73</scope>
</reference>
<reference key="7">
    <citation type="journal article" date="2018" name="Elife">
        <title>Thioredoxin shapes the C. elegans sensory response to Pseudomonas produced nitric oxide.</title>
        <authorList>
            <person name="Hao Y."/>
            <person name="Yang W."/>
            <person name="Ren J."/>
            <person name="Hall Q."/>
            <person name="Zhang Y."/>
            <person name="Kaplan J.M."/>
        </authorList>
    </citation>
    <scope>FUNCTION</scope>
    <scope>DISRUPTION PHENOTYPE</scope>
</reference>
<gene>
    <name type="primary">trx-1</name>
    <name type="ORF">B0228.5</name>
</gene>
<feature type="chain" id="PRO_0000120027" description="Thioredoxin-1">
    <location>
        <begin position="1"/>
        <end position="115"/>
    </location>
</feature>
<feature type="domain" description="Thioredoxin" evidence="3">
    <location>
        <begin position="2"/>
        <end position="114"/>
    </location>
</feature>
<feature type="active site" description="Nucleophile" evidence="2">
    <location>
        <position position="39"/>
    </location>
</feature>
<feature type="active site" description="Nucleophile" evidence="2">
    <location>
        <position position="42"/>
    </location>
</feature>
<feature type="site" description="Deprotonates C-terminal active site Cys" evidence="1">
    <location>
        <position position="33"/>
    </location>
</feature>
<feature type="site" description="Contributes to redox potential value" evidence="1">
    <location>
        <position position="40"/>
    </location>
</feature>
<feature type="site" description="Contributes to redox potential value" evidence="1">
    <location>
        <position position="41"/>
    </location>
</feature>
<feature type="disulfide bond" description="Redox-active" evidence="3">
    <location>
        <begin position="39"/>
        <end position="42"/>
    </location>
</feature>
<feature type="splice variant" id="VSP_019285" description="In isoform b." evidence="10">
    <original>LKRCNFKNQVKYFQ</original>
    <variation>SLTKEPILELADM</variation>
    <location>
        <begin position="2"/>
        <end position="15"/>
    </location>
</feature>
<feature type="mutagenesis site" description="No change in suppression of the constitutive dauer formation phenotype in a daf-28(sa191) mutant background. No impact on skn-1 nuclear localization." evidence="6 8">
    <original>CGPC</original>
    <variation>SGPS</variation>
    <location>
        <begin position="39"/>
        <end position="42"/>
    </location>
</feature>
<feature type="mutagenesis site" description="In nu517; abolishes the calcium flux to the cytoplasm in the ASJ sensory neurons in response to the removal of a nitric oxide stimulus. No defect in P.aeruginosa avoidance." evidence="9">
    <original>C</original>
    <variation>S</variation>
    <location>
        <position position="39"/>
    </location>
</feature>
<feature type="mutagenesis site" description="Elimination of the nitric oxide-evoked calcium flux to the cytoplasm in ASJ sensory neurons. Defect in avoidance of P.aeruginosa." evidence="9">
    <original>C</original>
    <variation>S</variation>
    <location>
        <position position="73"/>
    </location>
</feature>
<name>THIO1_CAEEL</name>
<sequence>MLKRCNFKNQVKYFQSDFEQLIRQHPEKIIILDFYATWCGPCKAIAPLYKELATTHKGIIFCKVDVDEAEDLCSKYDVKMMPTFIFTKNGDAIEALEGCVEDELRQKVLEHVSAQ</sequence>
<protein>
    <recommendedName>
        <fullName>Thioredoxin-1</fullName>
    </recommendedName>
</protein>
<keyword id="KW-0025">Alternative splicing</keyword>
<keyword id="KW-1015">Disulfide bond</keyword>
<keyword id="KW-0249">Electron transport</keyword>
<keyword id="KW-0676">Redox-active center</keyword>
<keyword id="KW-1185">Reference proteome</keyword>
<keyword id="KW-0813">Transport</keyword>
<comment type="function">
    <text evidence="4 5 6 7 8 9">Participates in various redox reactions through the reversible oxidation of its active center dithiol to a disulfide and catalyzes dithiol-disulfide exchange reactions (PubMed:16324156, PubMed:16387300). Shown to facilitate the reduction of insulin disulfide bonds (PubMed:16324156, PubMed:16387300). Might play a role in the reversible nitrosylation of cysteine residues in target proteins, and thereby contributing to the response to intracellular nitric oxide (PubMed:30014846). Shapes the ASJ sensory neuron biphasic response to nitric oxide (NO) exposure; trans-nitrosylation activity might inhibit calcium flux to the cytoplasm in ASJ neurons when exposed to a NO stimulus, whereas de-nitrosylation activity might promote calcium flux when NO is diminished (PubMed:30014846). By regulating the NO-induced ASJ sensory neuron activity, mediates the avoidance response to NO-producing organisms like P.aeruginosa (PubMed:30014846). Positively regulates life span extension under normal and caloric restriction conditions, dauer formation and the oxidative stress response (PubMed:16324156, PubMed:16387300, PubMed:21304598, PubMed:21334311, PubMed:26920757). Contributes to the down-regulation of expression of the insulin-like neuropeptide daf-28 in the ASJ neurons in a redox-independent fashion, thereby promoting dauer formation (PubMed:21304598). Negatively regulates the nuclear localization of the intestinal skn-1 transcription factor in a p38 MAPK pathway-dependent and redox-independent fashion (PubMed:26920757).</text>
</comment>
<comment type="alternative products">
    <event type="alternative splicing"/>
    <isoform>
        <id>Q09433-1</id>
        <name>a</name>
        <sequence type="displayed"/>
    </isoform>
    <isoform>
        <id>Q09433-2</id>
        <name>b</name>
        <sequence type="described" ref="VSP_019285"/>
    </isoform>
</comment>
<comment type="tissue specificity">
    <text evidence="4 5 6 7">Expressed in ASJ and ASI ciliated sensory neurons (PubMed:16324156, PubMed:16387300, PubMed:21304598, PubMed:21334311). Expressed in the intestine (at protein level) (PubMed:16324156).</text>
</comment>
<comment type="developmental stage">
    <text evidence="4 6">Expressed in larval stages L2 and L3 and increased expression during dauer stage (PubMed:21304598). Expressed in adult animals with increased expression in 10-day-old animals (PubMed:16324156).</text>
</comment>
<comment type="induction">
    <text evidence="6 7">Up-regulated in response to dietary restriction and during dauer formation.</text>
</comment>
<comment type="disruption phenotype">
    <text evidence="4 5 6 7 8 9">Increased nitric oxide-evoked calcium flux to cytoplasm in ASJ sensory neurons (PubMed:30014846). Decreased avoidance of P.aeruginosa (PubMed:30014846). Decrease in lifespan (PubMed:16324156, PubMed:16387300). Suppression of lifespan extension induced by dietary deprivation or in an eat-2(ad1116) mutant background and partial suppression in a daf-2(e1370) mutant background (PubMed:21334311). Enhancement of the constitutive dauer formation phenotype in a daf-11(ks67), daf-11(m47), daf-11(sa195), daf-7(e1372), daf-1(e1287) or daf-8(e1393) mutant background at 15 degrees Celsius (PubMed:21304598). Suppression of the constitutive dauer formation phenotype in a daf-11(sa195), daf-28(tm2308) or daf-28(sa191) mutant background at 25 degrees Celsius (PubMed:21304598). Failure in down-regulation of daf-28 expression during dauer stage (PubMed:21304598). Decreased survival when facing oxidative stress upon exposure to sodium arsenite or paraquat (PubMed:16324156, PubMed:26920757). Increased localization of skn-1 to the nuclei of intestinal cells (PubMed:26920757). Suppression of skn-1 nuclear localization in a nsy-1(ok593), sek-1(km4) or pmk-1(km25) mutant background (PubMed:26920757).</text>
</comment>
<comment type="similarity">
    <text evidence="11">Belongs to the thioredoxin family.</text>
</comment>
<accession>Q09433</accession>
<accession>Q306X0</accession>
<accession>Q7YZF7</accession>
<proteinExistence type="evidence at protein level"/>
<dbReference type="EMBL" id="DQ241299">
    <property type="protein sequence ID" value="ABB45863.1"/>
    <property type="molecule type" value="mRNA"/>
</dbReference>
<dbReference type="EMBL" id="DQ241300">
    <property type="protein sequence ID" value="ABB45864.1"/>
    <property type="molecule type" value="mRNA"/>
</dbReference>
<dbReference type="EMBL" id="FO080130">
    <property type="protein sequence ID" value="CCD61448.1"/>
    <property type="molecule type" value="Genomic_DNA"/>
</dbReference>
<dbReference type="EMBL" id="FO080130">
    <property type="protein sequence ID" value="CCD61449.1"/>
    <property type="molecule type" value="Genomic_DNA"/>
</dbReference>
<dbReference type="PIR" id="T29044">
    <property type="entry name" value="T29044"/>
</dbReference>
<dbReference type="RefSeq" id="NP_001021885.1">
    <molecule id="Q09433-1"/>
    <property type="nucleotide sequence ID" value="NM_001026714.4"/>
</dbReference>
<dbReference type="RefSeq" id="NP_001021886.1">
    <molecule id="Q09433-2"/>
    <property type="nucleotide sequence ID" value="NM_001026715.7"/>
</dbReference>
<dbReference type="SMR" id="Q09433"/>
<dbReference type="BioGRID" id="46730">
    <property type="interactions" value="1"/>
</dbReference>
<dbReference type="FunCoup" id="Q09433">
    <property type="interactions" value="517"/>
</dbReference>
<dbReference type="STRING" id="6239.B0228.5a.1"/>
<dbReference type="PaxDb" id="6239-B0228.5a"/>
<dbReference type="PeptideAtlas" id="Q09433"/>
<dbReference type="EnsemblMetazoa" id="B0228.5a.1">
    <molecule id="Q09433-1"/>
    <property type="protein sequence ID" value="B0228.5a.1"/>
    <property type="gene ID" value="WBGene00015062"/>
</dbReference>
<dbReference type="EnsemblMetazoa" id="B0228.5b.1">
    <molecule id="Q09433-2"/>
    <property type="protein sequence ID" value="B0228.5b.1"/>
    <property type="gene ID" value="WBGene00015062"/>
</dbReference>
<dbReference type="GeneID" id="181863"/>
<dbReference type="KEGG" id="cel:CELE_B0228.5"/>
<dbReference type="UCSC" id="B0228.5b">
    <molecule id="Q09433-1"/>
    <property type="organism name" value="c. elegans"/>
</dbReference>
<dbReference type="AGR" id="WB:WBGene00015062"/>
<dbReference type="CTD" id="181863"/>
<dbReference type="WormBase" id="B0228.5a">
    <molecule id="Q09433-1"/>
    <property type="protein sequence ID" value="CE01745"/>
    <property type="gene ID" value="WBGene00015062"/>
    <property type="gene designation" value="trx-1"/>
</dbReference>
<dbReference type="WormBase" id="B0228.5b">
    <molecule id="Q09433-2"/>
    <property type="protein sequence ID" value="CE34629"/>
    <property type="gene ID" value="WBGene00015062"/>
    <property type="gene designation" value="trx-1"/>
</dbReference>
<dbReference type="eggNOG" id="KOG0907">
    <property type="taxonomic scope" value="Eukaryota"/>
</dbReference>
<dbReference type="HOGENOM" id="CLU_090389_14_6_1"/>
<dbReference type="InParanoid" id="Q09433"/>
<dbReference type="OMA" id="WCIPSVF"/>
<dbReference type="OrthoDB" id="2121326at2759"/>
<dbReference type="PhylomeDB" id="Q09433"/>
<dbReference type="Reactome" id="R-CEL-2559580">
    <property type="pathway name" value="Oxidative Stress Induced Senescence"/>
</dbReference>
<dbReference type="Reactome" id="R-CEL-3299685">
    <property type="pathway name" value="Detoxification of Reactive Oxygen Species"/>
</dbReference>
<dbReference type="Reactome" id="R-CEL-499943">
    <property type="pathway name" value="Interconversion of nucleotide di- and triphosphates"/>
</dbReference>
<dbReference type="Reactome" id="R-CEL-5628897">
    <property type="pathway name" value="TP53 Regulates Metabolic Genes"/>
</dbReference>
<dbReference type="Reactome" id="R-CEL-5676934">
    <property type="pathway name" value="Protein repair"/>
</dbReference>
<dbReference type="Reactome" id="R-CEL-844456">
    <property type="pathway name" value="The NLRP3 inflammasome"/>
</dbReference>
<dbReference type="PRO" id="PR:Q09433"/>
<dbReference type="Proteomes" id="UP000001940">
    <property type="component" value="Chromosome II"/>
</dbReference>
<dbReference type="Bgee" id="WBGene00015062">
    <property type="expression patterns" value="Expressed in pharyngeal muscle cell (C elegans) and 3 other cell types or tissues"/>
</dbReference>
<dbReference type="GO" id="GO:0030424">
    <property type="term" value="C:axon"/>
    <property type="evidence" value="ECO:0000314"/>
    <property type="project" value="WormBase"/>
</dbReference>
<dbReference type="GO" id="GO:0005737">
    <property type="term" value="C:cytoplasm"/>
    <property type="evidence" value="ECO:0000314"/>
    <property type="project" value="WormBase"/>
</dbReference>
<dbReference type="GO" id="GO:0030425">
    <property type="term" value="C:dendrite"/>
    <property type="evidence" value="ECO:0000314"/>
    <property type="project" value="WormBase"/>
</dbReference>
<dbReference type="GO" id="GO:0043025">
    <property type="term" value="C:neuronal cell body"/>
    <property type="evidence" value="ECO:0000314"/>
    <property type="project" value="WormBase"/>
</dbReference>
<dbReference type="GO" id="GO:0097730">
    <property type="term" value="C:non-motile cilium"/>
    <property type="evidence" value="ECO:0000314"/>
    <property type="project" value="WormBase"/>
</dbReference>
<dbReference type="GO" id="GO:0005634">
    <property type="term" value="C:nucleus"/>
    <property type="evidence" value="ECO:0000314"/>
    <property type="project" value="WormBase"/>
</dbReference>
<dbReference type="GO" id="GO:0015035">
    <property type="term" value="F:protein-disulfide reductase activity"/>
    <property type="evidence" value="ECO:0000314"/>
    <property type="project" value="WormBase"/>
</dbReference>
<dbReference type="GO" id="GO:0008340">
    <property type="term" value="P:determination of adult lifespan"/>
    <property type="evidence" value="ECO:0000315"/>
    <property type="project" value="WormBase"/>
</dbReference>
<dbReference type="CDD" id="cd02947">
    <property type="entry name" value="TRX_family"/>
    <property type="match status" value="1"/>
</dbReference>
<dbReference type="Gene3D" id="3.40.30.10">
    <property type="entry name" value="Glutaredoxin"/>
    <property type="match status" value="1"/>
</dbReference>
<dbReference type="InterPro" id="IPR005746">
    <property type="entry name" value="Thioredoxin"/>
</dbReference>
<dbReference type="InterPro" id="IPR036249">
    <property type="entry name" value="Thioredoxin-like_sf"/>
</dbReference>
<dbReference type="InterPro" id="IPR017937">
    <property type="entry name" value="Thioredoxin_CS"/>
</dbReference>
<dbReference type="InterPro" id="IPR013766">
    <property type="entry name" value="Thioredoxin_domain"/>
</dbReference>
<dbReference type="PANTHER" id="PTHR46115">
    <property type="entry name" value="THIOREDOXIN-LIKE PROTEIN 1"/>
    <property type="match status" value="1"/>
</dbReference>
<dbReference type="Pfam" id="PF00085">
    <property type="entry name" value="Thioredoxin"/>
    <property type="match status" value="1"/>
</dbReference>
<dbReference type="PIRSF" id="PIRSF000077">
    <property type="entry name" value="Thioredoxin"/>
    <property type="match status" value="1"/>
</dbReference>
<dbReference type="PRINTS" id="PR00421">
    <property type="entry name" value="THIOREDOXIN"/>
</dbReference>
<dbReference type="SUPFAM" id="SSF52833">
    <property type="entry name" value="Thioredoxin-like"/>
    <property type="match status" value="1"/>
</dbReference>
<dbReference type="PROSITE" id="PS00194">
    <property type="entry name" value="THIOREDOXIN_1"/>
    <property type="match status" value="1"/>
</dbReference>
<dbReference type="PROSITE" id="PS51352">
    <property type="entry name" value="THIOREDOXIN_2"/>
    <property type="match status" value="1"/>
</dbReference>
<evidence type="ECO:0000250" key="1"/>
<evidence type="ECO:0000250" key="2">
    <source>
        <dbReference type="UniProtKB" id="P29445"/>
    </source>
</evidence>
<evidence type="ECO:0000255" key="3">
    <source>
        <dbReference type="PROSITE-ProRule" id="PRU00691"/>
    </source>
</evidence>
<evidence type="ECO:0000269" key="4">
    <source>
    </source>
</evidence>
<evidence type="ECO:0000269" key="5">
    <source>
    </source>
</evidence>
<evidence type="ECO:0000269" key="6">
    <source>
    </source>
</evidence>
<evidence type="ECO:0000269" key="7">
    <source>
    </source>
</evidence>
<evidence type="ECO:0000269" key="8">
    <source>
    </source>
</evidence>
<evidence type="ECO:0000269" key="9">
    <source>
    </source>
</evidence>
<evidence type="ECO:0000303" key="10">
    <source>
    </source>
</evidence>
<evidence type="ECO:0000305" key="11"/>